<reference key="1">
    <citation type="journal article" date="2004" name="Proc. Natl. Acad. Sci. U.S.A.">
        <title>The diploid genome sequence of Candida albicans.</title>
        <authorList>
            <person name="Jones T."/>
            <person name="Federspiel N.A."/>
            <person name="Chibana H."/>
            <person name="Dungan J."/>
            <person name="Kalman S."/>
            <person name="Magee B.B."/>
            <person name="Newport G."/>
            <person name="Thorstenson Y.R."/>
            <person name="Agabian N."/>
            <person name="Magee P.T."/>
            <person name="Davis R.W."/>
            <person name="Scherer S."/>
        </authorList>
    </citation>
    <scope>NUCLEOTIDE SEQUENCE [LARGE SCALE GENOMIC DNA]</scope>
    <source>
        <strain>SC5314 / ATCC MYA-2876</strain>
    </source>
</reference>
<reference key="2">
    <citation type="journal article" date="2007" name="Genome Biol.">
        <title>Assembly of the Candida albicans genome into sixteen supercontigs aligned on the eight chromosomes.</title>
        <authorList>
            <person name="van het Hoog M."/>
            <person name="Rast T.J."/>
            <person name="Martchenko M."/>
            <person name="Grindle S."/>
            <person name="Dignard D."/>
            <person name="Hogues H."/>
            <person name="Cuomo C."/>
            <person name="Berriman M."/>
            <person name="Scherer S."/>
            <person name="Magee B.B."/>
            <person name="Whiteway M."/>
            <person name="Chibana H."/>
            <person name="Nantel A."/>
            <person name="Magee P.T."/>
        </authorList>
    </citation>
    <scope>GENOME REANNOTATION</scope>
    <source>
        <strain>SC5314 / ATCC MYA-2876</strain>
    </source>
</reference>
<reference key="3">
    <citation type="journal article" date="2013" name="Genome Biol.">
        <title>Assembly of a phased diploid Candida albicans genome facilitates allele-specific measurements and provides a simple model for repeat and indel structure.</title>
        <authorList>
            <person name="Muzzey D."/>
            <person name="Schwartz K."/>
            <person name="Weissman J.S."/>
            <person name="Sherlock G."/>
        </authorList>
    </citation>
    <scope>NUCLEOTIDE SEQUENCE [LARGE SCALE GENOMIC DNA]</scope>
    <scope>GENOME REANNOTATION</scope>
    <source>
        <strain>SC5314 / ATCC MYA-2876</strain>
    </source>
</reference>
<proteinExistence type="inferred from homology"/>
<name>MED17_CANAL</name>
<sequence length="565" mass="65595">MVEKQFNIDLELNDTGHIDPFLQDEDKLKLEELIPRILFERKSFLNVTEDSLRKEIDNSLKISEEDALDTEESREDTVEADQQEVFNKHKFELSKNINNALNETQLSLDFVSLLISSVKPSLAKSTISPHLSKFVKPTSLNSDRLGQDSNDNQESKATDSFGQGWKLESLGKITDLFREASTNLNDQVIKERRYWNMINLVLANDEVLFRMRDPQNNARAIGVKYGYGDSGSNFHDQGLALLRKDNQTGEISFHPISSINNAKIVEKVSRFIRVKILSQIDGDYMLTGQSIFNFDFEKSKQSIINDIEKARFFLFEEDLFHQLIREAKLLVNYNVSIISNKIIIEINNIIIEIESIVYDELNEEELENYYQNVNEYSTLHNKKCQLILNYLKLMLCCYYKYNLKLKQKVPTALTKWKQSNSHPLILRPLVGNMRHELNLLNMKSVLDRLMHAHESELSYSKLDVEKFINLATRSKKQNPFQKSIEKPISKFHLVLCNKTSNMLDVNIQLTTNESFVNLIINMTIIRFETEDDFKNNVNGINVLQLGFSDFNEIEECLDWSIQNFV</sequence>
<evidence type="ECO:0000250" key="1"/>
<evidence type="ECO:0000256" key="2">
    <source>
        <dbReference type="SAM" id="MobiDB-lite"/>
    </source>
</evidence>
<evidence type="ECO:0000305" key="3"/>
<organism>
    <name type="scientific">Candida albicans (strain SC5314 / ATCC MYA-2876)</name>
    <name type="common">Yeast</name>
    <dbReference type="NCBI Taxonomy" id="237561"/>
    <lineage>
        <taxon>Eukaryota</taxon>
        <taxon>Fungi</taxon>
        <taxon>Dikarya</taxon>
        <taxon>Ascomycota</taxon>
        <taxon>Saccharomycotina</taxon>
        <taxon>Pichiomycetes</taxon>
        <taxon>Debaryomycetaceae</taxon>
        <taxon>Candida/Lodderomyces clade</taxon>
        <taxon>Candida</taxon>
    </lineage>
</organism>
<accession>Q5AHZ7</accession>
<accession>A0A1D8PD37</accession>
<comment type="function">
    <text evidence="1">Component of the Mediator complex, a coactivator involved in the regulated transcription of nearly all RNA polymerase II-dependent genes. Mediator functions as a bridge to convey information from gene-specific regulatory proteins to the basal RNA polymerase II transcription machinery. Mediator is recruited to promoters by direct interactions with regulatory proteins and serves as a scaffold for the assembly of a functional preinitiation complex with RNA polymerase II and the general transcription factors (By similarity).</text>
</comment>
<comment type="subunit">
    <text evidence="1">Component of the Mediator complex.</text>
</comment>
<comment type="subcellular location">
    <subcellularLocation>
        <location evidence="1">Nucleus</location>
    </subcellularLocation>
</comment>
<comment type="similarity">
    <text evidence="3">Belongs to the Mediator complex subunit 17 family.</text>
</comment>
<keyword id="KW-0010">Activator</keyword>
<keyword id="KW-0539">Nucleus</keyword>
<keyword id="KW-1185">Reference proteome</keyword>
<keyword id="KW-0804">Transcription</keyword>
<keyword id="KW-0805">Transcription regulation</keyword>
<protein>
    <recommendedName>
        <fullName>Mediator of RNA polymerase II transcription subunit 17</fullName>
    </recommendedName>
    <alternativeName>
        <fullName>Mediator complex subunit 17</fullName>
    </alternativeName>
</protein>
<feature type="chain" id="PRO_0000304713" description="Mediator of RNA polymerase II transcription subunit 17">
    <location>
        <begin position="1"/>
        <end position="565"/>
    </location>
</feature>
<feature type="region of interest" description="Disordered" evidence="2">
    <location>
        <begin position="138"/>
        <end position="160"/>
    </location>
</feature>
<feature type="compositionally biased region" description="Polar residues" evidence="2">
    <location>
        <begin position="138"/>
        <end position="152"/>
    </location>
</feature>
<gene>
    <name type="primary">SRB4</name>
    <name type="synonym">MED17</name>
    <name type="ordered locus">CAALFM_C103530WA</name>
    <name type="ORF">CaO19.10573</name>
    <name type="ORF">CaO19.3055</name>
</gene>
<dbReference type="EMBL" id="CP017623">
    <property type="protein sequence ID" value="AOW26033.1"/>
    <property type="molecule type" value="Genomic_DNA"/>
</dbReference>
<dbReference type="RefSeq" id="XP_019330629.1">
    <property type="nucleotide sequence ID" value="XM_019475084.1"/>
</dbReference>
<dbReference type="SMR" id="Q5AHZ7"/>
<dbReference type="BioGRID" id="1220012">
    <property type="interactions" value="2"/>
</dbReference>
<dbReference type="FunCoup" id="Q5AHZ7">
    <property type="interactions" value="178"/>
</dbReference>
<dbReference type="STRING" id="237561.Q5AHZ7"/>
<dbReference type="EnsemblFungi" id="C1_03530W_A-T">
    <property type="protein sequence ID" value="C1_03530W_A-T-p1"/>
    <property type="gene ID" value="C1_03530W_A"/>
</dbReference>
<dbReference type="GeneID" id="3636918"/>
<dbReference type="KEGG" id="cal:CAALFM_C103530WA"/>
<dbReference type="CGD" id="CAL0000197516">
    <property type="gene designation" value="MED17"/>
</dbReference>
<dbReference type="VEuPathDB" id="FungiDB:C1_03530W_A"/>
<dbReference type="eggNOG" id="ENOG502QS9H">
    <property type="taxonomic scope" value="Eukaryota"/>
</dbReference>
<dbReference type="HOGENOM" id="CLU_750039_0_0_1"/>
<dbReference type="InParanoid" id="Q5AHZ7"/>
<dbReference type="OMA" id="PKINDKR"/>
<dbReference type="OrthoDB" id="5319830at2759"/>
<dbReference type="PRO" id="PR:Q5AHZ7"/>
<dbReference type="Proteomes" id="UP000000559">
    <property type="component" value="Chromosome 1"/>
</dbReference>
<dbReference type="GO" id="GO:0070847">
    <property type="term" value="C:core mediator complex"/>
    <property type="evidence" value="ECO:0000318"/>
    <property type="project" value="GO_Central"/>
</dbReference>
<dbReference type="GO" id="GO:0016592">
    <property type="term" value="C:mediator complex"/>
    <property type="evidence" value="ECO:0000318"/>
    <property type="project" value="GO_Central"/>
</dbReference>
<dbReference type="GO" id="GO:0003712">
    <property type="term" value="F:transcription coregulator activity"/>
    <property type="evidence" value="ECO:0000318"/>
    <property type="project" value="GO_Central"/>
</dbReference>
<dbReference type="GO" id="GO:0006357">
    <property type="term" value="P:regulation of transcription by RNA polymerase II"/>
    <property type="evidence" value="ECO:0000318"/>
    <property type="project" value="GO_Central"/>
</dbReference>
<dbReference type="Gene3D" id="6.10.250.2620">
    <property type="match status" value="1"/>
</dbReference>
<dbReference type="InterPro" id="IPR019313">
    <property type="entry name" value="Mediator_Med17"/>
</dbReference>
<dbReference type="PANTHER" id="PTHR13114">
    <property type="entry name" value="MEDIATOR OF RNA POLYMERASE II TRANSCRIPTION SUBUNIT 17"/>
    <property type="match status" value="1"/>
</dbReference>
<dbReference type="PANTHER" id="PTHR13114:SF7">
    <property type="entry name" value="MEDIATOR OF RNA POLYMERASE II TRANSCRIPTION SUBUNIT 17"/>
    <property type="match status" value="1"/>
</dbReference>
<dbReference type="Pfam" id="PF10156">
    <property type="entry name" value="Med17"/>
    <property type="match status" value="1"/>
</dbReference>